<evidence type="ECO:0000250" key="1"/>
<evidence type="ECO:0000250" key="2">
    <source>
        <dbReference type="UniProtKB" id="Q50EL0"/>
    </source>
</evidence>
<evidence type="ECO:0000269" key="3">
    <source>
    </source>
</evidence>
<evidence type="ECO:0000305" key="4"/>
<reference key="1">
    <citation type="journal article" date="2004" name="Fungal Genet. Biol.">
        <title>The determinant step in ergot alkaloid biosynthesis by an endophyte of perennial ryegrass.</title>
        <authorList>
            <person name="Wang J."/>
            <person name="Machado C."/>
            <person name="Panaccione D.G."/>
            <person name="Tsai H.-F."/>
            <person name="Schardl C.L."/>
        </authorList>
    </citation>
    <scope>NUCLEOTIDE SEQUENCE [GENOMIC DNA]</scope>
    <scope>FUNCTION</scope>
</reference>
<gene>
    <name type="primary">dmaW</name>
</gene>
<organism>
    <name type="scientific">Epichloe typhina x Neotyphodium lolii</name>
    <name type="common">Neotyphodium sp. (strain Lp1)</name>
    <dbReference type="NCBI Taxonomy" id="1915362"/>
    <lineage>
        <taxon>Eukaryota</taxon>
        <taxon>Fungi</taxon>
        <taxon>Dikarya</taxon>
        <taxon>Ascomycota</taxon>
        <taxon>Pezizomycotina</taxon>
        <taxon>Sordariomycetes</taxon>
        <taxon>Hypocreomycetidae</taxon>
        <taxon>Hypocreales</taxon>
        <taxon>Clavicipitaceae</taxon>
        <taxon>Epichloe</taxon>
    </lineage>
</organism>
<proteinExistence type="inferred from homology"/>
<comment type="function">
    <text evidence="3">Catalyzes the first step of ergot alkaloid biosynthesis. Ergot alkaloids, which are produced by endophyte fungi, can enhance plant host fitness, but also cause livestock toxicosis to host plants.</text>
</comment>
<comment type="catalytic activity">
    <reaction>
        <text>L-tryptophan + dimethylallyl diphosphate = 4-(3-methylbut-2-enyl)-L-tryptophan + diphosphate</text>
        <dbReference type="Rhea" id="RHEA:14173"/>
        <dbReference type="ChEBI" id="CHEBI:33019"/>
        <dbReference type="ChEBI" id="CHEBI:57623"/>
        <dbReference type="ChEBI" id="CHEBI:57912"/>
        <dbReference type="ChEBI" id="CHEBI:58209"/>
        <dbReference type="EC" id="2.5.1.34"/>
    </reaction>
</comment>
<comment type="pathway">
    <text>Alkaloid biosynthesis; ergot alkaloid biosynthesis.</text>
</comment>
<comment type="subunit">
    <text evidence="1">Homodimer.</text>
</comment>
<comment type="similarity">
    <text evidence="4">Belongs to the tryptophan dimethylallyltransferase family.</text>
</comment>
<sequence length="450" mass="52226">MVLAKTLHQEVYQTLSETFDFANNDQRLWWHSTAPMFQKILQTANYSIYAQYQHLSIYKSHIIPFLGVYPTRSGERWLSILTRYGTPFELSLNCSDSIVRYTYEPINAATGSHLDPFNTFAIWEALKKLIDSQPGIDLQWFSYFKQELTLDANESTYLHSQNLVKEQIKTQNKLALDLKGDKFVLKTYIYPELKSVATGKSVQELVFGSVRKLAQKHKSIRPAFEMLEDYVQSRNKVPTTDDSHNTPLSSRLLSCDLVSPTKSRVKIYLLERMVSLPAMEDLWTLGGRREDQSTIEGLEMIRELWGLLNMSPGLRAYPEPYLPLGAIPNEQLPSMANYTLHHNDPIPEPQVYFTVFGMNDMEVTNALTKFFMRHEWSDMASKYKACLRESFPHHNYEALNYIHSYISFSYRNNKPYLSVYLHSFETGEWPVFPEGLIAFDGCRRDLTCYK</sequence>
<keyword id="KW-0017">Alkaloid metabolism</keyword>
<keyword id="KW-0808">Transferase</keyword>
<dbReference type="EC" id="2.5.1.34"/>
<dbReference type="EMBL" id="AY259837">
    <property type="protein sequence ID" value="AAP81206.1"/>
    <property type="molecule type" value="Genomic_DNA"/>
</dbReference>
<dbReference type="SMR" id="Q6X2E3"/>
<dbReference type="UniPathway" id="UPA00327"/>
<dbReference type="GO" id="GO:0050364">
    <property type="term" value="F:tryptophan dimethylallyltransferase activity"/>
    <property type="evidence" value="ECO:0007669"/>
    <property type="project" value="UniProtKB-EC"/>
</dbReference>
<dbReference type="GO" id="GO:0035837">
    <property type="term" value="P:ergot alkaloid biosynthetic process"/>
    <property type="evidence" value="ECO:0007669"/>
    <property type="project" value="InterPro"/>
</dbReference>
<dbReference type="CDD" id="cd13929">
    <property type="entry name" value="PT-DMATS_CymD"/>
    <property type="match status" value="1"/>
</dbReference>
<dbReference type="InterPro" id="IPR033964">
    <property type="entry name" value="Aro_prenylTrfase"/>
</dbReference>
<dbReference type="InterPro" id="IPR017795">
    <property type="entry name" value="Aro_prenylTrfase_DMATS"/>
</dbReference>
<dbReference type="InterPro" id="IPR012148">
    <property type="entry name" value="DMATS-type_fun"/>
</dbReference>
<dbReference type="InterPro" id="IPR017796">
    <property type="entry name" value="Trp_dimethylallylTrfase"/>
</dbReference>
<dbReference type="NCBIfam" id="TIGR03429">
    <property type="entry name" value="arom_pren_DMATS"/>
    <property type="match status" value="1"/>
</dbReference>
<dbReference type="NCBIfam" id="TIGR03430">
    <property type="entry name" value="trp_dimet_allyl"/>
    <property type="match status" value="1"/>
</dbReference>
<dbReference type="PANTHER" id="PTHR40627">
    <property type="entry name" value="INDOLE PRENYLTRANSFERASE TDIB-RELATED"/>
    <property type="match status" value="1"/>
</dbReference>
<dbReference type="PANTHER" id="PTHR40627:SF3">
    <property type="entry name" value="PRENYLTRANSFERASE ASQH2-RELATED"/>
    <property type="match status" value="1"/>
</dbReference>
<dbReference type="Pfam" id="PF11991">
    <property type="entry name" value="Trp_DMAT"/>
    <property type="match status" value="1"/>
</dbReference>
<dbReference type="PIRSF" id="PIRSF000509">
    <property type="entry name" value="Trp_DMAT"/>
    <property type="match status" value="1"/>
</dbReference>
<dbReference type="SFLD" id="SFLDS00036">
    <property type="entry name" value="Aromatic_Prenyltransferase"/>
    <property type="match status" value="1"/>
</dbReference>
<dbReference type="SFLD" id="SFLDG01162">
    <property type="entry name" value="I"/>
    <property type="match status" value="1"/>
</dbReference>
<accession>Q6X2E3</accession>
<protein>
    <recommendedName>
        <fullName>Tryptophan dimethylallyltransferase</fullName>
        <ecNumber>2.5.1.34</ecNumber>
    </recommendedName>
    <alternativeName>
        <fullName>4-dimethylallyltryptophan synthase</fullName>
    </alternativeName>
    <alternativeName>
        <fullName>All-trans-hexaprenyl-diphosphate synthase</fullName>
    </alternativeName>
    <alternativeName>
        <fullName>L-tryptophan dimethylallyl transferase</fullName>
        <shortName>DMATS</shortName>
    </alternativeName>
</protein>
<feature type="chain" id="PRO_0000181366" description="Tryptophan dimethylallyltransferase">
    <location>
        <begin position="1"/>
        <end position="450"/>
    </location>
</feature>
<feature type="binding site" evidence="2">
    <location>
        <begin position="80"/>
        <end position="81"/>
    </location>
    <ligand>
        <name>L-tryptophan</name>
        <dbReference type="ChEBI" id="CHEBI:57912"/>
    </ligand>
</feature>
<feature type="binding site" evidence="2">
    <location>
        <position position="89"/>
    </location>
    <ligand>
        <name>L-tryptophan</name>
        <dbReference type="ChEBI" id="CHEBI:57912"/>
    </ligand>
</feature>
<feature type="binding site" evidence="2">
    <location>
        <position position="100"/>
    </location>
    <ligand>
        <name>substrate</name>
    </ligand>
</feature>
<feature type="binding site" evidence="2">
    <location>
        <position position="186"/>
    </location>
    <ligand>
        <name>substrate</name>
    </ligand>
</feature>
<feature type="binding site" evidence="2">
    <location>
        <position position="188"/>
    </location>
    <ligand>
        <name>substrate</name>
    </ligand>
</feature>
<feature type="binding site" evidence="2">
    <location>
        <position position="190"/>
    </location>
    <ligand>
        <name>L-tryptophan</name>
        <dbReference type="ChEBI" id="CHEBI:57912"/>
    </ligand>
</feature>
<feature type="binding site" evidence="2">
    <location>
        <position position="251"/>
    </location>
    <ligand>
        <name>L-tryptophan</name>
        <dbReference type="ChEBI" id="CHEBI:57912"/>
    </ligand>
</feature>
<feature type="binding site" evidence="2">
    <location>
        <position position="264"/>
    </location>
    <ligand>
        <name>substrate</name>
    </ligand>
</feature>
<feature type="binding site" evidence="2">
    <location>
        <position position="266"/>
    </location>
    <ligand>
        <name>substrate</name>
    </ligand>
</feature>
<feature type="binding site" evidence="2">
    <location>
        <position position="268"/>
    </location>
    <ligand>
        <name>substrate</name>
    </ligand>
</feature>
<feature type="binding site" evidence="2">
    <location>
        <position position="350"/>
    </location>
    <ligand>
        <name>substrate</name>
    </ligand>
</feature>
<feature type="binding site" evidence="2">
    <location>
        <position position="352"/>
    </location>
    <ligand>
        <name>substrate</name>
    </ligand>
</feature>
<feature type="binding site" evidence="2">
    <location>
        <position position="416"/>
    </location>
    <ligand>
        <name>substrate</name>
    </ligand>
</feature>
<feature type="binding site" evidence="2">
    <location>
        <position position="420"/>
    </location>
    <ligand>
        <name>substrate</name>
    </ligand>
</feature>
<name>DMAW_EPINE</name>